<feature type="chain" id="PRO_0000092677" description="Glycine betaine/carnitine/choline transport ATP-binding protein OpuCA">
    <location>
        <begin position="1"/>
        <end position="380"/>
    </location>
</feature>
<feature type="domain" description="ABC transporter" evidence="1">
    <location>
        <begin position="2"/>
        <end position="236"/>
    </location>
</feature>
<feature type="domain" description="CBS 1" evidence="2">
    <location>
        <begin position="255"/>
        <end position="314"/>
    </location>
</feature>
<feature type="domain" description="CBS 2" evidence="2">
    <location>
        <begin position="315"/>
        <end position="373"/>
    </location>
</feature>
<feature type="binding site" evidence="1">
    <location>
        <begin position="35"/>
        <end position="42"/>
    </location>
    <ligand>
        <name>ATP</name>
        <dbReference type="ChEBI" id="CHEBI:30616"/>
    </ligand>
</feature>
<reference key="1">
    <citation type="journal article" date="1999" name="Mol. Microbiol.">
        <title>Two evolutionarily closely related ABC transporters mediate the uptake of choline for synthesis of the osmoprotectant glycine betaine in Bacillus subtilis.</title>
        <authorList>
            <person name="Kappes R.M."/>
            <person name="Kempf B."/>
            <person name="Kneip S."/>
            <person name="Boch J."/>
            <person name="Gade J."/>
            <person name="Meier-Wagner J."/>
            <person name="Bremer E."/>
        </authorList>
    </citation>
    <scope>NUCLEOTIDE SEQUENCE [GENOMIC DNA]</scope>
    <scope>FUNCTION</scope>
    <scope>SUBUNIT</scope>
    <source>
        <strain>168 / JH642</strain>
    </source>
</reference>
<reference key="2">
    <citation type="journal article" date="1997" name="Nature">
        <title>The complete genome sequence of the Gram-positive bacterium Bacillus subtilis.</title>
        <authorList>
            <person name="Kunst F."/>
            <person name="Ogasawara N."/>
            <person name="Moszer I."/>
            <person name="Albertini A.M."/>
            <person name="Alloni G."/>
            <person name="Azevedo V."/>
            <person name="Bertero M.G."/>
            <person name="Bessieres P."/>
            <person name="Bolotin A."/>
            <person name="Borchert S."/>
            <person name="Borriss R."/>
            <person name="Boursier L."/>
            <person name="Brans A."/>
            <person name="Braun M."/>
            <person name="Brignell S.C."/>
            <person name="Bron S."/>
            <person name="Brouillet S."/>
            <person name="Bruschi C.V."/>
            <person name="Caldwell B."/>
            <person name="Capuano V."/>
            <person name="Carter N.M."/>
            <person name="Choi S.-K."/>
            <person name="Codani J.-J."/>
            <person name="Connerton I.F."/>
            <person name="Cummings N.J."/>
            <person name="Daniel R.A."/>
            <person name="Denizot F."/>
            <person name="Devine K.M."/>
            <person name="Duesterhoeft A."/>
            <person name="Ehrlich S.D."/>
            <person name="Emmerson P.T."/>
            <person name="Entian K.-D."/>
            <person name="Errington J."/>
            <person name="Fabret C."/>
            <person name="Ferrari E."/>
            <person name="Foulger D."/>
            <person name="Fritz C."/>
            <person name="Fujita M."/>
            <person name="Fujita Y."/>
            <person name="Fuma S."/>
            <person name="Galizzi A."/>
            <person name="Galleron N."/>
            <person name="Ghim S.-Y."/>
            <person name="Glaser P."/>
            <person name="Goffeau A."/>
            <person name="Golightly E.J."/>
            <person name="Grandi G."/>
            <person name="Guiseppi G."/>
            <person name="Guy B.J."/>
            <person name="Haga K."/>
            <person name="Haiech J."/>
            <person name="Harwood C.R."/>
            <person name="Henaut A."/>
            <person name="Hilbert H."/>
            <person name="Holsappel S."/>
            <person name="Hosono S."/>
            <person name="Hullo M.-F."/>
            <person name="Itaya M."/>
            <person name="Jones L.-M."/>
            <person name="Joris B."/>
            <person name="Karamata D."/>
            <person name="Kasahara Y."/>
            <person name="Klaerr-Blanchard M."/>
            <person name="Klein C."/>
            <person name="Kobayashi Y."/>
            <person name="Koetter P."/>
            <person name="Koningstein G."/>
            <person name="Krogh S."/>
            <person name="Kumano M."/>
            <person name="Kurita K."/>
            <person name="Lapidus A."/>
            <person name="Lardinois S."/>
            <person name="Lauber J."/>
            <person name="Lazarevic V."/>
            <person name="Lee S.-M."/>
            <person name="Levine A."/>
            <person name="Liu H."/>
            <person name="Masuda S."/>
            <person name="Mauel C."/>
            <person name="Medigue C."/>
            <person name="Medina N."/>
            <person name="Mellado R.P."/>
            <person name="Mizuno M."/>
            <person name="Moestl D."/>
            <person name="Nakai S."/>
            <person name="Noback M."/>
            <person name="Noone D."/>
            <person name="O'Reilly M."/>
            <person name="Ogawa K."/>
            <person name="Ogiwara A."/>
            <person name="Oudega B."/>
            <person name="Park S.-H."/>
            <person name="Parro V."/>
            <person name="Pohl T.M."/>
            <person name="Portetelle D."/>
            <person name="Porwollik S."/>
            <person name="Prescott A.M."/>
            <person name="Presecan E."/>
            <person name="Pujic P."/>
            <person name="Purnelle B."/>
            <person name="Rapoport G."/>
            <person name="Rey M."/>
            <person name="Reynolds S."/>
            <person name="Rieger M."/>
            <person name="Rivolta C."/>
            <person name="Rocha E."/>
            <person name="Roche B."/>
            <person name="Rose M."/>
            <person name="Sadaie Y."/>
            <person name="Sato T."/>
            <person name="Scanlan E."/>
            <person name="Schleich S."/>
            <person name="Schroeter R."/>
            <person name="Scoffone F."/>
            <person name="Sekiguchi J."/>
            <person name="Sekowska A."/>
            <person name="Seror S.J."/>
            <person name="Serror P."/>
            <person name="Shin B.-S."/>
            <person name="Soldo B."/>
            <person name="Sorokin A."/>
            <person name="Tacconi E."/>
            <person name="Takagi T."/>
            <person name="Takahashi H."/>
            <person name="Takemaru K."/>
            <person name="Takeuchi M."/>
            <person name="Tamakoshi A."/>
            <person name="Tanaka T."/>
            <person name="Terpstra P."/>
            <person name="Tognoni A."/>
            <person name="Tosato V."/>
            <person name="Uchiyama S."/>
            <person name="Vandenbol M."/>
            <person name="Vannier F."/>
            <person name="Vassarotti A."/>
            <person name="Viari A."/>
            <person name="Wambutt R."/>
            <person name="Wedler E."/>
            <person name="Wedler H."/>
            <person name="Weitzenegger T."/>
            <person name="Winters P."/>
            <person name="Wipat A."/>
            <person name="Yamamoto H."/>
            <person name="Yamane K."/>
            <person name="Yasumoto K."/>
            <person name="Yata K."/>
            <person name="Yoshida K."/>
            <person name="Yoshikawa H.-F."/>
            <person name="Zumstein E."/>
            <person name="Yoshikawa H."/>
            <person name="Danchin A."/>
        </authorList>
    </citation>
    <scope>NUCLEOTIDE SEQUENCE [LARGE SCALE GENOMIC DNA]</scope>
    <source>
        <strain>168</strain>
    </source>
</reference>
<reference key="3">
    <citation type="journal article" date="1996" name="J. Bacteriol.">
        <title>Three transport systems for the osmoprotectant glycine betaine operate in Bacillus subtilis: characterization of OpuD.</title>
        <authorList>
            <person name="Kappes R."/>
            <person name="Kempf B."/>
            <person name="Bremer E."/>
        </authorList>
    </citation>
    <scope>FUNCTION IN GLYCINE BETAINE TRANSPORT</scope>
    <source>
        <strain>168 / JH642</strain>
    </source>
</reference>
<reference key="4">
    <citation type="journal article" date="2013" name="Microbiology">
        <title>Involvement of OpcR, a GbsR-type transcriptional regulator, in negative regulation of two evolutionarily closely related choline uptake genes in Bacillus subtilis.</title>
        <authorList>
            <person name="Lee C.H."/>
            <person name="Wu T.Y."/>
            <person name="Shaw G.C."/>
        </authorList>
    </citation>
    <scope>INDUCTION</scope>
    <source>
        <strain>168</strain>
    </source>
</reference>
<reference key="5">
    <citation type="journal article" date="2019" name="J. Biol. Chem.">
        <title>Sustained sensing in potassium homeostasis: Cyclic di-AMP controls potassium uptake by KimA at the levels of expression and activity.</title>
        <authorList>
            <person name="Gundlach J."/>
            <person name="Krueger L."/>
            <person name="Herzberg C."/>
            <person name="Turdiev A."/>
            <person name="Poehlein A."/>
            <person name="Tascon I."/>
            <person name="Weiss M."/>
            <person name="Hertel D."/>
            <person name="Daniel R."/>
            <person name="Haenelt I."/>
            <person name="Lee V.T."/>
            <person name="Stuelke J."/>
        </authorList>
    </citation>
    <scope>ACTIVITY REGULATION</scope>
    <source>
        <strain>168</strain>
    </source>
</reference>
<sequence>MLKLEQVSKVYKGGKKAVNSIDLDIAKGEFICFIGPSGCGKTTTMKMINRLIEPSSGRIFIDGENIMEQDPVELRRKIGYVIQQIGLFPHMTIQQNISLVPKLLKWPEEKRKERARELLKLVDMGPEYLDRYPHELSGGQQQRIGVLRALAAEPPLILMDEPFGALDPITRDSLQEEFKKLQRTLNKTIVFVTHDMDEAIKLADRIVILKAGEIVQVGTPDEILRNPANEFVEEFIGKERLIQSRPDIERVEQMMNRTPVTVSADKTLSQAIQLMREKRVDSLLVVDRQNVLKGYVDVEMIDQNRKKASIVGDVYRSDIYTVQKGALLRDTVRKILKQGIKYVPVVDEQNHLAGIVTRASLVDIVYDSIWGDEENQLMTI</sequence>
<protein>
    <recommendedName>
        <fullName>Glycine betaine/carnitine/choline transport ATP-binding protein OpuCA</fullName>
    </recommendedName>
</protein>
<dbReference type="EMBL" id="AF009352">
    <property type="protein sequence ID" value="AAB63768.1"/>
    <property type="molecule type" value="Genomic_DNA"/>
</dbReference>
<dbReference type="EMBL" id="AL009126">
    <property type="protein sequence ID" value="CAB15388.1"/>
    <property type="molecule type" value="Genomic_DNA"/>
</dbReference>
<dbReference type="PIR" id="C69670">
    <property type="entry name" value="C69670"/>
</dbReference>
<dbReference type="RefSeq" id="NP_391263.1">
    <property type="nucleotide sequence ID" value="NC_000964.3"/>
</dbReference>
<dbReference type="RefSeq" id="WP_003243370.1">
    <property type="nucleotide sequence ID" value="NZ_OZ025638.1"/>
</dbReference>
<dbReference type="SMR" id="O34992"/>
<dbReference type="FunCoup" id="O34992">
    <property type="interactions" value="576"/>
</dbReference>
<dbReference type="STRING" id="224308.BSU33830"/>
<dbReference type="TCDB" id="3.A.1.12.4">
    <property type="family name" value="the atp-binding cassette (abc) superfamily"/>
</dbReference>
<dbReference type="PaxDb" id="224308-BSU33830"/>
<dbReference type="EnsemblBacteria" id="CAB15388">
    <property type="protein sequence ID" value="CAB15388"/>
    <property type="gene ID" value="BSU_33830"/>
</dbReference>
<dbReference type="GeneID" id="937136"/>
<dbReference type="KEGG" id="bsu:BSU33830"/>
<dbReference type="PATRIC" id="fig|224308.179.peg.3668"/>
<dbReference type="eggNOG" id="COG0517">
    <property type="taxonomic scope" value="Bacteria"/>
</dbReference>
<dbReference type="eggNOG" id="COG1125">
    <property type="taxonomic scope" value="Bacteria"/>
</dbReference>
<dbReference type="InParanoid" id="O34992"/>
<dbReference type="OrthoDB" id="9802264at2"/>
<dbReference type="PhylomeDB" id="O34992"/>
<dbReference type="BioCyc" id="BSUB:BSU33830-MONOMER"/>
<dbReference type="Proteomes" id="UP000001570">
    <property type="component" value="Chromosome"/>
</dbReference>
<dbReference type="GO" id="GO:0016020">
    <property type="term" value="C:membrane"/>
    <property type="evidence" value="ECO:0007669"/>
    <property type="project" value="InterPro"/>
</dbReference>
<dbReference type="GO" id="GO:0005524">
    <property type="term" value="F:ATP binding"/>
    <property type="evidence" value="ECO:0007669"/>
    <property type="project" value="UniProtKB-KW"/>
</dbReference>
<dbReference type="GO" id="GO:0016887">
    <property type="term" value="F:ATP hydrolysis activity"/>
    <property type="evidence" value="ECO:0007669"/>
    <property type="project" value="InterPro"/>
</dbReference>
<dbReference type="GO" id="GO:0006865">
    <property type="term" value="P:amino acid transport"/>
    <property type="evidence" value="ECO:0007669"/>
    <property type="project" value="UniProtKB-KW"/>
</dbReference>
<dbReference type="GO" id="GO:0031460">
    <property type="term" value="P:glycine betaine transport"/>
    <property type="evidence" value="ECO:0007669"/>
    <property type="project" value="InterPro"/>
</dbReference>
<dbReference type="CDD" id="cd03295">
    <property type="entry name" value="ABC_OpuCA_Osmoprotection"/>
    <property type="match status" value="1"/>
</dbReference>
<dbReference type="CDD" id="cd04583">
    <property type="entry name" value="CBS_pair_ABC_OpuCA_assoc"/>
    <property type="match status" value="1"/>
</dbReference>
<dbReference type="FunFam" id="3.40.50.300:FF:000201">
    <property type="entry name" value="Glycine betaine/L-proline ABC transporter ATP-binding protein"/>
    <property type="match status" value="1"/>
</dbReference>
<dbReference type="Gene3D" id="3.10.580.10">
    <property type="entry name" value="CBS-domain"/>
    <property type="match status" value="1"/>
</dbReference>
<dbReference type="Gene3D" id="3.40.50.300">
    <property type="entry name" value="P-loop containing nucleotide triphosphate hydrolases"/>
    <property type="match status" value="1"/>
</dbReference>
<dbReference type="InterPro" id="IPR003593">
    <property type="entry name" value="AAA+_ATPase"/>
</dbReference>
<dbReference type="InterPro" id="IPR003439">
    <property type="entry name" value="ABC_transporter-like_ATP-bd"/>
</dbReference>
<dbReference type="InterPro" id="IPR017871">
    <property type="entry name" value="ABC_transporter-like_CS"/>
</dbReference>
<dbReference type="InterPro" id="IPR000644">
    <property type="entry name" value="CBS_dom"/>
</dbReference>
<dbReference type="InterPro" id="IPR046342">
    <property type="entry name" value="CBS_dom_sf"/>
</dbReference>
<dbReference type="InterPro" id="IPR005892">
    <property type="entry name" value="Gly-betaine_transp_ATP-bd"/>
</dbReference>
<dbReference type="InterPro" id="IPR027417">
    <property type="entry name" value="P-loop_NTPase"/>
</dbReference>
<dbReference type="NCBIfam" id="TIGR01186">
    <property type="entry name" value="proV"/>
    <property type="match status" value="1"/>
</dbReference>
<dbReference type="PANTHER" id="PTHR43117:SF3">
    <property type="entry name" value="CHOLINE TRANSPORT ATP-BINDING PROTEIN OPUBA"/>
    <property type="match status" value="1"/>
</dbReference>
<dbReference type="PANTHER" id="PTHR43117">
    <property type="entry name" value="OSMOPROTECTANT IMPORT ATP-BINDING PROTEIN OSMV"/>
    <property type="match status" value="1"/>
</dbReference>
<dbReference type="Pfam" id="PF00005">
    <property type="entry name" value="ABC_tran"/>
    <property type="match status" value="1"/>
</dbReference>
<dbReference type="Pfam" id="PF00571">
    <property type="entry name" value="CBS"/>
    <property type="match status" value="2"/>
</dbReference>
<dbReference type="SMART" id="SM00382">
    <property type="entry name" value="AAA"/>
    <property type="match status" value="1"/>
</dbReference>
<dbReference type="SMART" id="SM00116">
    <property type="entry name" value="CBS"/>
    <property type="match status" value="2"/>
</dbReference>
<dbReference type="SUPFAM" id="SSF54631">
    <property type="entry name" value="CBS-domain pair"/>
    <property type="match status" value="1"/>
</dbReference>
<dbReference type="SUPFAM" id="SSF52540">
    <property type="entry name" value="P-loop containing nucleoside triphosphate hydrolases"/>
    <property type="match status" value="1"/>
</dbReference>
<dbReference type="PROSITE" id="PS00211">
    <property type="entry name" value="ABC_TRANSPORTER_1"/>
    <property type="match status" value="1"/>
</dbReference>
<dbReference type="PROSITE" id="PS50893">
    <property type="entry name" value="ABC_TRANSPORTER_2"/>
    <property type="match status" value="1"/>
</dbReference>
<dbReference type="PROSITE" id="PS51371">
    <property type="entry name" value="CBS"/>
    <property type="match status" value="2"/>
</dbReference>
<comment type="function">
    <text evidence="3 6">Involved in a high affinity multicomponent binding-protein-dependent transport system for glycine betaine, carnitine and choline; probably responsible for energy coupling to the transport system.</text>
</comment>
<comment type="activity regulation">
    <text evidence="5">Binds cyclic di-AMP (c-di-AMP), which may regulate the transporter activity.</text>
</comment>
<comment type="subunit">
    <text evidence="3">The complex is composed of two ATP-binding proteins (OpuCA), two transmembrane proteins (OpuCB and OpuCD) and a solute-binding protein (OpuCC).</text>
</comment>
<comment type="induction">
    <text evidence="4">Repressed by OpcR.</text>
</comment>
<comment type="similarity">
    <text evidence="7">Belongs to the ABC transporter superfamily.</text>
</comment>
<evidence type="ECO:0000255" key="1">
    <source>
        <dbReference type="PROSITE-ProRule" id="PRU00434"/>
    </source>
</evidence>
<evidence type="ECO:0000255" key="2">
    <source>
        <dbReference type="PROSITE-ProRule" id="PRU00703"/>
    </source>
</evidence>
<evidence type="ECO:0000269" key="3">
    <source>
    </source>
</evidence>
<evidence type="ECO:0000269" key="4">
    <source>
    </source>
</evidence>
<evidence type="ECO:0000269" key="5">
    <source>
    </source>
</evidence>
<evidence type="ECO:0000269" key="6">
    <source>
    </source>
</evidence>
<evidence type="ECO:0000305" key="7"/>
<keyword id="KW-0029">Amino-acid transport</keyword>
<keyword id="KW-0067">ATP-binding</keyword>
<keyword id="KW-0129">CBS domain</keyword>
<keyword id="KW-0547">Nucleotide-binding</keyword>
<keyword id="KW-1185">Reference proteome</keyword>
<keyword id="KW-0677">Repeat</keyword>
<keyword id="KW-0813">Transport</keyword>
<proteinExistence type="evidence at protein level"/>
<accession>O34992</accession>
<name>OPUCA_BACSU</name>
<organism>
    <name type="scientific">Bacillus subtilis (strain 168)</name>
    <dbReference type="NCBI Taxonomy" id="224308"/>
    <lineage>
        <taxon>Bacteria</taxon>
        <taxon>Bacillati</taxon>
        <taxon>Bacillota</taxon>
        <taxon>Bacilli</taxon>
        <taxon>Bacillales</taxon>
        <taxon>Bacillaceae</taxon>
        <taxon>Bacillus</taxon>
    </lineage>
</organism>
<gene>
    <name type="primary">opuCA</name>
    <name type="synonym">yvbE</name>
    <name type="ordered locus">BSU33830</name>
</gene>